<evidence type="ECO:0000255" key="1">
    <source>
        <dbReference type="HAMAP-Rule" id="MF_00327"/>
    </source>
</evidence>
<evidence type="ECO:0000305" key="2"/>
<gene>
    <name evidence="1" type="primary">rpl37ae</name>
    <name type="ordered locus">MmarC5_1424</name>
</gene>
<keyword id="KW-0479">Metal-binding</keyword>
<keyword id="KW-0687">Ribonucleoprotein</keyword>
<keyword id="KW-0689">Ribosomal protein</keyword>
<keyword id="KW-0694">RNA-binding</keyword>
<keyword id="KW-0862">Zinc</keyword>
<keyword id="KW-0863">Zinc-finger</keyword>
<reference key="1">
    <citation type="submission" date="2007-03" db="EMBL/GenBank/DDBJ databases">
        <title>Complete sequence of chromosome of Methanococcus maripaludis C5.</title>
        <authorList>
            <consortium name="US DOE Joint Genome Institute"/>
            <person name="Copeland A."/>
            <person name="Lucas S."/>
            <person name="Lapidus A."/>
            <person name="Barry K."/>
            <person name="Glavina del Rio T."/>
            <person name="Dalin E."/>
            <person name="Tice H."/>
            <person name="Pitluck S."/>
            <person name="Chertkov O."/>
            <person name="Brettin T."/>
            <person name="Bruce D."/>
            <person name="Han C."/>
            <person name="Detter J.C."/>
            <person name="Schmutz J."/>
            <person name="Larimer F."/>
            <person name="Land M."/>
            <person name="Hauser L."/>
            <person name="Kyrpides N."/>
            <person name="Mikhailova N."/>
            <person name="Sieprawska-Lupa M."/>
            <person name="Whitman W.B."/>
            <person name="Richardson P."/>
        </authorList>
    </citation>
    <scope>NUCLEOTIDE SEQUENCE [LARGE SCALE GENOMIC DNA]</scope>
    <source>
        <strain>C5 / ATCC BAA-1333</strain>
    </source>
</reference>
<protein>
    <recommendedName>
        <fullName evidence="1">Large ribosomal subunit protein eL43</fullName>
    </recommendedName>
    <alternativeName>
        <fullName evidence="2">50S ribosomal protein L37Ae</fullName>
    </alternativeName>
    <alternativeName>
        <fullName evidence="1">Ribosomal protein L43e</fullName>
    </alternativeName>
</protein>
<organism>
    <name type="scientific">Methanococcus maripaludis (strain C5 / ATCC BAA-1333)</name>
    <dbReference type="NCBI Taxonomy" id="402880"/>
    <lineage>
        <taxon>Archaea</taxon>
        <taxon>Methanobacteriati</taxon>
        <taxon>Methanobacteriota</taxon>
        <taxon>Methanomada group</taxon>
        <taxon>Methanococci</taxon>
        <taxon>Methanococcales</taxon>
        <taxon>Methanococcaceae</taxon>
        <taxon>Methanococcus</taxon>
    </lineage>
</organism>
<comment type="cofactor">
    <cofactor evidence="1">
        <name>Zn(2+)</name>
        <dbReference type="ChEBI" id="CHEBI:29105"/>
    </cofactor>
    <text evidence="1">Binds 1 zinc ion per subunit.</text>
</comment>
<comment type="similarity">
    <text evidence="1">Belongs to the eukaryotic ribosomal protein eL43 family.</text>
</comment>
<sequence>MVEFSHTKKIGSAGRFGSRYGRKIRVRLRDVEIKQKKEYKCPVCAFPKLKRAGTSIWVCEKCGAKIAGGAYTPETGAGKVVTKAIRRVIESKSREI</sequence>
<name>RL37A_METM5</name>
<accession>A4FZT8</accession>
<dbReference type="EMBL" id="CP000609">
    <property type="protein sequence ID" value="ABO35722.1"/>
    <property type="molecule type" value="Genomic_DNA"/>
</dbReference>
<dbReference type="RefSeq" id="WP_011869172.1">
    <property type="nucleotide sequence ID" value="NC_009135.1"/>
</dbReference>
<dbReference type="SMR" id="A4FZT8"/>
<dbReference type="STRING" id="402880.MmarC5_1424"/>
<dbReference type="GeneID" id="4928505"/>
<dbReference type="KEGG" id="mmq:MmarC5_1424"/>
<dbReference type="eggNOG" id="arCOG04208">
    <property type="taxonomic scope" value="Archaea"/>
</dbReference>
<dbReference type="HOGENOM" id="CLU_141199_2_0_2"/>
<dbReference type="OrthoDB" id="372011at2157"/>
<dbReference type="Proteomes" id="UP000000253">
    <property type="component" value="Chromosome"/>
</dbReference>
<dbReference type="GO" id="GO:1990904">
    <property type="term" value="C:ribonucleoprotein complex"/>
    <property type="evidence" value="ECO:0007669"/>
    <property type="project" value="UniProtKB-KW"/>
</dbReference>
<dbReference type="GO" id="GO:0005840">
    <property type="term" value="C:ribosome"/>
    <property type="evidence" value="ECO:0007669"/>
    <property type="project" value="UniProtKB-KW"/>
</dbReference>
<dbReference type="GO" id="GO:0070180">
    <property type="term" value="F:large ribosomal subunit rRNA binding"/>
    <property type="evidence" value="ECO:0007669"/>
    <property type="project" value="UniProtKB-UniRule"/>
</dbReference>
<dbReference type="GO" id="GO:0003735">
    <property type="term" value="F:structural constituent of ribosome"/>
    <property type="evidence" value="ECO:0007669"/>
    <property type="project" value="InterPro"/>
</dbReference>
<dbReference type="GO" id="GO:0008270">
    <property type="term" value="F:zinc ion binding"/>
    <property type="evidence" value="ECO:0007669"/>
    <property type="project" value="UniProtKB-UniRule"/>
</dbReference>
<dbReference type="GO" id="GO:0006412">
    <property type="term" value="P:translation"/>
    <property type="evidence" value="ECO:0007669"/>
    <property type="project" value="UniProtKB-UniRule"/>
</dbReference>
<dbReference type="Gene3D" id="2.20.25.30">
    <property type="match status" value="1"/>
</dbReference>
<dbReference type="HAMAP" id="MF_00327">
    <property type="entry name" value="Ribosomal_eL43"/>
    <property type="match status" value="1"/>
</dbReference>
<dbReference type="InterPro" id="IPR011331">
    <property type="entry name" value="Ribosomal_eL37/eL43"/>
</dbReference>
<dbReference type="InterPro" id="IPR002674">
    <property type="entry name" value="Ribosomal_eL43"/>
</dbReference>
<dbReference type="InterPro" id="IPR050522">
    <property type="entry name" value="Ribosomal_protein_eL43"/>
</dbReference>
<dbReference type="InterPro" id="IPR011332">
    <property type="entry name" value="Ribosomal_zn-bd"/>
</dbReference>
<dbReference type="NCBIfam" id="TIGR00280">
    <property type="entry name" value="eL43_euk_arch"/>
    <property type="match status" value="1"/>
</dbReference>
<dbReference type="NCBIfam" id="NF003058">
    <property type="entry name" value="PRK03976.1"/>
    <property type="match status" value="1"/>
</dbReference>
<dbReference type="PANTHER" id="PTHR48129">
    <property type="entry name" value="60S RIBOSOMAL PROTEIN L37A"/>
    <property type="match status" value="1"/>
</dbReference>
<dbReference type="PANTHER" id="PTHR48129:SF1">
    <property type="entry name" value="LARGE RIBOSOMAL SUBUNIT PROTEIN EL43"/>
    <property type="match status" value="1"/>
</dbReference>
<dbReference type="Pfam" id="PF01780">
    <property type="entry name" value="Ribosomal_L37ae"/>
    <property type="match status" value="1"/>
</dbReference>
<dbReference type="SUPFAM" id="SSF57829">
    <property type="entry name" value="Zn-binding ribosomal proteins"/>
    <property type="match status" value="1"/>
</dbReference>
<proteinExistence type="inferred from homology"/>
<feature type="chain" id="PRO_1000005036" description="Large ribosomal subunit protein eL43">
    <location>
        <begin position="1"/>
        <end position="96"/>
    </location>
</feature>
<feature type="zinc finger region" description="C4-type" evidence="1">
    <location>
        <begin position="41"/>
        <end position="62"/>
    </location>
</feature>